<gene>
    <name type="primary">mtd1</name>
    <name type="ORF">SPBC1711.04</name>
</gene>
<proteinExistence type="inferred from homology"/>
<evidence type="ECO:0000250" key="1"/>
<evidence type="ECO:0000269" key="2">
    <source>
    </source>
</evidence>
<evidence type="ECO:0000305" key="3"/>
<sequence length="320" mass="35814">MSNTNKSEPNHSCKVVYASRVAETFVEQLKQHVNLFEFAPKLVGFLSNSDPAARMYADWTNKTCTEIGFQYELREVPKDDLEDAIVEANNDPSVNGIMIYFPVFNDGQDQYLQQVVSPDKDVEGLCHKYVMNMYHNIRHLDPEKTKKSILPCTPLAIVKILEYLGVYNKIINYGNRLYGKTITIVNRSEIVGRPLAALLANDGAKVYSVDIHNVQCFTRGAGIRSKKHDVADTNFKLEDVAPISDVIICGVPSANYKFPSNLVRDGAVCICFSSEKNFDAASLKEHAGIYVPSIGKVTIAMLLRNLIRLTSYQLNKPVDI</sequence>
<comment type="function">
    <text evidence="1">Catalyzes oxidation of cytoplasmic one-carbon units for purine biosynthesis.</text>
</comment>
<comment type="catalytic activity">
    <reaction>
        <text>(6R)-5,10-methylene-5,6,7,8-tetrahydrofolate + NAD(+) = (6R)-5,10-methenyltetrahydrofolate + NADH</text>
        <dbReference type="Rhea" id="RHEA:22892"/>
        <dbReference type="ChEBI" id="CHEBI:15636"/>
        <dbReference type="ChEBI" id="CHEBI:57455"/>
        <dbReference type="ChEBI" id="CHEBI:57540"/>
        <dbReference type="ChEBI" id="CHEBI:57945"/>
        <dbReference type="EC" id="1.5.1.15"/>
    </reaction>
</comment>
<comment type="pathway">
    <text>One-carbon metabolism; tetrahydrofolate interconversion.</text>
</comment>
<comment type="subunit">
    <text evidence="1">Homodimer.</text>
</comment>
<comment type="subcellular location">
    <subcellularLocation>
        <location evidence="2">Cytoplasm</location>
    </subcellularLocation>
    <subcellularLocation>
        <location evidence="2">Nucleus</location>
    </subcellularLocation>
</comment>
<comment type="similarity">
    <text evidence="3">Belongs to the tetrahydrofolate dehydrogenase/cyclohydrolase family.</text>
</comment>
<protein>
    <recommendedName>
        <fullName>Methylenetetrahydrofolate dehydrogenase [NAD(+)]</fullName>
        <ecNumber>1.5.1.15</ecNumber>
    </recommendedName>
</protein>
<dbReference type="EC" id="1.5.1.15"/>
<dbReference type="EMBL" id="CU329671">
    <property type="protein sequence ID" value="CAB88234.1"/>
    <property type="molecule type" value="Genomic_DNA"/>
</dbReference>
<dbReference type="RefSeq" id="NP_595877.1">
    <property type="nucleotide sequence ID" value="NM_001021783.2"/>
</dbReference>
<dbReference type="SMR" id="Q9P786"/>
<dbReference type="BioGRID" id="276430">
    <property type="interactions" value="4"/>
</dbReference>
<dbReference type="FunCoup" id="Q9P786">
    <property type="interactions" value="511"/>
</dbReference>
<dbReference type="STRING" id="284812.Q9P786"/>
<dbReference type="iPTMnet" id="Q9P786"/>
<dbReference type="PaxDb" id="4896-SPBC1711.04.1"/>
<dbReference type="EnsemblFungi" id="SPBC1711.04.1">
    <property type="protein sequence ID" value="SPBC1711.04.1:pep"/>
    <property type="gene ID" value="SPBC1711.04"/>
</dbReference>
<dbReference type="GeneID" id="2539884"/>
<dbReference type="KEGG" id="spo:2539884"/>
<dbReference type="PomBase" id="SPBC1711.04">
    <property type="gene designation" value="mtd1"/>
</dbReference>
<dbReference type="VEuPathDB" id="FungiDB:SPBC1711.04"/>
<dbReference type="eggNOG" id="KOG0089">
    <property type="taxonomic scope" value="Eukaryota"/>
</dbReference>
<dbReference type="HOGENOM" id="CLU_031413_0_0_1"/>
<dbReference type="InParanoid" id="Q9P786"/>
<dbReference type="OMA" id="CKVITAE"/>
<dbReference type="PhylomeDB" id="Q9P786"/>
<dbReference type="UniPathway" id="UPA00193"/>
<dbReference type="PRO" id="PR:Q9P786"/>
<dbReference type="Proteomes" id="UP000002485">
    <property type="component" value="Chromosome II"/>
</dbReference>
<dbReference type="GO" id="GO:0005829">
    <property type="term" value="C:cytosol"/>
    <property type="evidence" value="ECO:0007005"/>
    <property type="project" value="PomBase"/>
</dbReference>
<dbReference type="GO" id="GO:0005634">
    <property type="term" value="C:nucleus"/>
    <property type="evidence" value="ECO:0007005"/>
    <property type="project" value="PomBase"/>
</dbReference>
<dbReference type="GO" id="GO:0004487">
    <property type="term" value="F:methylenetetrahydrofolate dehydrogenase (NAD+) activity"/>
    <property type="evidence" value="ECO:0000318"/>
    <property type="project" value="GO_Central"/>
</dbReference>
<dbReference type="GO" id="GO:0004488">
    <property type="term" value="F:methylenetetrahydrofolate dehydrogenase (NADP+) activity"/>
    <property type="evidence" value="ECO:0007669"/>
    <property type="project" value="InterPro"/>
</dbReference>
<dbReference type="GO" id="GO:0046656">
    <property type="term" value="P:folic acid biosynthetic process"/>
    <property type="evidence" value="ECO:0000266"/>
    <property type="project" value="PomBase"/>
</dbReference>
<dbReference type="GO" id="GO:0006164">
    <property type="term" value="P:purine nucleotide biosynthetic process"/>
    <property type="evidence" value="ECO:0007669"/>
    <property type="project" value="UniProtKB-KW"/>
</dbReference>
<dbReference type="GO" id="GO:0035999">
    <property type="term" value="P:tetrahydrofolate interconversion"/>
    <property type="evidence" value="ECO:0007669"/>
    <property type="project" value="UniProtKB-UniPathway"/>
</dbReference>
<dbReference type="CDD" id="cd01079">
    <property type="entry name" value="NAD_bind_m-THF_DH"/>
    <property type="match status" value="1"/>
</dbReference>
<dbReference type="FunFam" id="3.40.50.720:FF:000255">
    <property type="entry name" value="Methylenetetrahydrofolate dehydrogenase"/>
    <property type="match status" value="1"/>
</dbReference>
<dbReference type="FunFam" id="3.40.50.10860:FF:000012">
    <property type="entry name" value="Methylenetetrahydrofolate dehydrogenase [NAD(+)]"/>
    <property type="match status" value="1"/>
</dbReference>
<dbReference type="Gene3D" id="3.40.50.10860">
    <property type="entry name" value="Leucine Dehydrogenase, chain A, domain 1"/>
    <property type="match status" value="1"/>
</dbReference>
<dbReference type="Gene3D" id="3.40.50.720">
    <property type="entry name" value="NAD(P)-binding Rossmann-like Domain"/>
    <property type="match status" value="1"/>
</dbReference>
<dbReference type="InterPro" id="IPR046346">
    <property type="entry name" value="Aminoacid_DH-like_N_sf"/>
</dbReference>
<dbReference type="InterPro" id="IPR035812">
    <property type="entry name" value="m-THF_DH_NAD-bd"/>
</dbReference>
<dbReference type="InterPro" id="IPR036291">
    <property type="entry name" value="NAD(P)-bd_dom_sf"/>
</dbReference>
<dbReference type="InterPro" id="IPR000672">
    <property type="entry name" value="THF_DH/CycHdrlase"/>
</dbReference>
<dbReference type="InterPro" id="IPR020630">
    <property type="entry name" value="THF_DH/CycHdrlase_cat_dom"/>
</dbReference>
<dbReference type="InterPro" id="IPR020631">
    <property type="entry name" value="THF_DH/CycHdrlase_NAD-bd_dom"/>
</dbReference>
<dbReference type="PANTHER" id="PTHR48099">
    <property type="entry name" value="C-1-TETRAHYDROFOLATE SYNTHASE, CYTOPLASMIC-RELATED"/>
    <property type="match status" value="1"/>
</dbReference>
<dbReference type="PANTHER" id="PTHR48099:SF3">
    <property type="entry name" value="METHYLENETETRAHYDROFOLATE DEHYDROGENASE [NAD(+)]"/>
    <property type="match status" value="1"/>
</dbReference>
<dbReference type="Pfam" id="PF00763">
    <property type="entry name" value="THF_DHG_CYH"/>
    <property type="match status" value="1"/>
</dbReference>
<dbReference type="Pfam" id="PF02882">
    <property type="entry name" value="THF_DHG_CYH_C"/>
    <property type="match status" value="1"/>
</dbReference>
<dbReference type="PRINTS" id="PR00085">
    <property type="entry name" value="THFDHDRGNASE"/>
</dbReference>
<dbReference type="SUPFAM" id="SSF53223">
    <property type="entry name" value="Aminoacid dehydrogenase-like, N-terminal domain"/>
    <property type="match status" value="1"/>
</dbReference>
<dbReference type="SUPFAM" id="SSF51735">
    <property type="entry name" value="NAD(P)-binding Rossmann-fold domains"/>
    <property type="match status" value="1"/>
</dbReference>
<organism>
    <name type="scientific">Schizosaccharomyces pombe (strain 972 / ATCC 24843)</name>
    <name type="common">Fission yeast</name>
    <dbReference type="NCBI Taxonomy" id="284812"/>
    <lineage>
        <taxon>Eukaryota</taxon>
        <taxon>Fungi</taxon>
        <taxon>Dikarya</taxon>
        <taxon>Ascomycota</taxon>
        <taxon>Taphrinomycotina</taxon>
        <taxon>Schizosaccharomycetes</taxon>
        <taxon>Schizosaccharomycetales</taxon>
        <taxon>Schizosaccharomycetaceae</taxon>
        <taxon>Schizosaccharomyces</taxon>
    </lineage>
</organism>
<keyword id="KW-0963">Cytoplasm</keyword>
<keyword id="KW-0520">NAD</keyword>
<keyword id="KW-0539">Nucleus</keyword>
<keyword id="KW-0554">One-carbon metabolism</keyword>
<keyword id="KW-0560">Oxidoreductase</keyword>
<keyword id="KW-0658">Purine biosynthesis</keyword>
<keyword id="KW-1185">Reference proteome</keyword>
<feature type="chain" id="PRO_0000316023" description="Methylenetetrahydrofolate dehydrogenase [NAD(+)]">
    <location>
        <begin position="1"/>
        <end position="320"/>
    </location>
</feature>
<feature type="active site" evidence="1">
    <location>
        <position position="152"/>
    </location>
</feature>
<feature type="binding site" evidence="1">
    <location>
        <begin position="187"/>
        <end position="188"/>
    </location>
    <ligand>
        <name>NAD(+)</name>
        <dbReference type="ChEBI" id="CHEBI:57540"/>
    </ligand>
</feature>
<feature type="binding site" evidence="1">
    <location>
        <begin position="210"/>
        <end position="211"/>
    </location>
    <ligand>
        <name>NAD(+)</name>
        <dbReference type="ChEBI" id="CHEBI:57540"/>
    </ligand>
</feature>
<reference key="1">
    <citation type="journal article" date="2002" name="Nature">
        <title>The genome sequence of Schizosaccharomyces pombe.</title>
        <authorList>
            <person name="Wood V."/>
            <person name="Gwilliam R."/>
            <person name="Rajandream M.A."/>
            <person name="Lyne M.H."/>
            <person name="Lyne R."/>
            <person name="Stewart A."/>
            <person name="Sgouros J.G."/>
            <person name="Peat N."/>
            <person name="Hayles J."/>
            <person name="Baker S.G."/>
            <person name="Basham D."/>
            <person name="Bowman S."/>
            <person name="Brooks K."/>
            <person name="Brown D."/>
            <person name="Brown S."/>
            <person name="Chillingworth T."/>
            <person name="Churcher C.M."/>
            <person name="Collins M."/>
            <person name="Connor R."/>
            <person name="Cronin A."/>
            <person name="Davis P."/>
            <person name="Feltwell T."/>
            <person name="Fraser A."/>
            <person name="Gentles S."/>
            <person name="Goble A."/>
            <person name="Hamlin N."/>
            <person name="Harris D.E."/>
            <person name="Hidalgo J."/>
            <person name="Hodgson G."/>
            <person name="Holroyd S."/>
            <person name="Hornsby T."/>
            <person name="Howarth S."/>
            <person name="Huckle E.J."/>
            <person name="Hunt S."/>
            <person name="Jagels K."/>
            <person name="James K.D."/>
            <person name="Jones L."/>
            <person name="Jones M."/>
            <person name="Leather S."/>
            <person name="McDonald S."/>
            <person name="McLean J."/>
            <person name="Mooney P."/>
            <person name="Moule S."/>
            <person name="Mungall K.L."/>
            <person name="Murphy L.D."/>
            <person name="Niblett D."/>
            <person name="Odell C."/>
            <person name="Oliver K."/>
            <person name="O'Neil S."/>
            <person name="Pearson D."/>
            <person name="Quail M.A."/>
            <person name="Rabbinowitsch E."/>
            <person name="Rutherford K.M."/>
            <person name="Rutter S."/>
            <person name="Saunders D."/>
            <person name="Seeger K."/>
            <person name="Sharp S."/>
            <person name="Skelton J."/>
            <person name="Simmonds M.N."/>
            <person name="Squares R."/>
            <person name="Squares S."/>
            <person name="Stevens K."/>
            <person name="Taylor K."/>
            <person name="Taylor R.G."/>
            <person name="Tivey A."/>
            <person name="Walsh S.V."/>
            <person name="Warren T."/>
            <person name="Whitehead S."/>
            <person name="Woodward J.R."/>
            <person name="Volckaert G."/>
            <person name="Aert R."/>
            <person name="Robben J."/>
            <person name="Grymonprez B."/>
            <person name="Weltjens I."/>
            <person name="Vanstreels E."/>
            <person name="Rieger M."/>
            <person name="Schaefer M."/>
            <person name="Mueller-Auer S."/>
            <person name="Gabel C."/>
            <person name="Fuchs M."/>
            <person name="Duesterhoeft A."/>
            <person name="Fritzc C."/>
            <person name="Holzer E."/>
            <person name="Moestl D."/>
            <person name="Hilbert H."/>
            <person name="Borzym K."/>
            <person name="Langer I."/>
            <person name="Beck A."/>
            <person name="Lehrach H."/>
            <person name="Reinhardt R."/>
            <person name="Pohl T.M."/>
            <person name="Eger P."/>
            <person name="Zimmermann W."/>
            <person name="Wedler H."/>
            <person name="Wambutt R."/>
            <person name="Purnelle B."/>
            <person name="Goffeau A."/>
            <person name="Cadieu E."/>
            <person name="Dreano S."/>
            <person name="Gloux S."/>
            <person name="Lelaure V."/>
            <person name="Mottier S."/>
            <person name="Galibert F."/>
            <person name="Aves S.J."/>
            <person name="Xiang Z."/>
            <person name="Hunt C."/>
            <person name="Moore K."/>
            <person name="Hurst S.M."/>
            <person name="Lucas M."/>
            <person name="Rochet M."/>
            <person name="Gaillardin C."/>
            <person name="Tallada V.A."/>
            <person name="Garzon A."/>
            <person name="Thode G."/>
            <person name="Daga R.R."/>
            <person name="Cruzado L."/>
            <person name="Jimenez J."/>
            <person name="Sanchez M."/>
            <person name="del Rey F."/>
            <person name="Benito J."/>
            <person name="Dominguez A."/>
            <person name="Revuelta J.L."/>
            <person name="Moreno S."/>
            <person name="Armstrong J."/>
            <person name="Forsburg S.L."/>
            <person name="Cerutti L."/>
            <person name="Lowe T."/>
            <person name="McCombie W.R."/>
            <person name="Paulsen I."/>
            <person name="Potashkin J."/>
            <person name="Shpakovski G.V."/>
            <person name="Ussery D."/>
            <person name="Barrell B.G."/>
            <person name="Nurse P."/>
        </authorList>
    </citation>
    <scope>NUCLEOTIDE SEQUENCE [LARGE SCALE GENOMIC DNA]</scope>
    <source>
        <strain>972 / ATCC 24843</strain>
    </source>
</reference>
<reference key="2">
    <citation type="journal article" date="2006" name="Nat. Biotechnol.">
        <title>ORFeome cloning and global analysis of protein localization in the fission yeast Schizosaccharomyces pombe.</title>
        <authorList>
            <person name="Matsuyama A."/>
            <person name="Arai R."/>
            <person name="Yashiroda Y."/>
            <person name="Shirai A."/>
            <person name="Kamata A."/>
            <person name="Sekido S."/>
            <person name="Kobayashi Y."/>
            <person name="Hashimoto A."/>
            <person name="Hamamoto M."/>
            <person name="Hiraoka Y."/>
            <person name="Horinouchi S."/>
            <person name="Yoshida M."/>
        </authorList>
    </citation>
    <scope>SUBCELLULAR LOCATION [LARGE SCALE ANALYSIS]</scope>
</reference>
<accession>Q9P786</accession>
<name>MTD1_SCHPO</name>